<proteinExistence type="evidence at protein level"/>
<organism>
    <name type="scientific">Saccharomyces cerevisiae (strain ATCC 204508 / S288c)</name>
    <name type="common">Baker's yeast</name>
    <dbReference type="NCBI Taxonomy" id="559292"/>
    <lineage>
        <taxon>Eukaryota</taxon>
        <taxon>Fungi</taxon>
        <taxon>Dikarya</taxon>
        <taxon>Ascomycota</taxon>
        <taxon>Saccharomycotina</taxon>
        <taxon>Saccharomycetes</taxon>
        <taxon>Saccharomycetales</taxon>
        <taxon>Saccharomycetaceae</taxon>
        <taxon>Saccharomyces</taxon>
    </lineage>
</organism>
<keyword id="KW-0406">Ion transport</keyword>
<keyword id="KW-0472">Membrane</keyword>
<keyword id="KW-0597">Phosphoprotein</keyword>
<keyword id="KW-1185">Reference proteome</keyword>
<keyword id="KW-0812">Transmembrane</keyword>
<keyword id="KW-1133">Transmembrane helix</keyword>
<keyword id="KW-0813">Transport</keyword>
<keyword id="KW-0862">Zinc</keyword>
<keyword id="KW-0864">Zinc transport</keyword>
<reference key="1">
    <citation type="journal article" date="1997" name="Nature">
        <title>The nucleotide sequence of Saccharomyces cerevisiae chromosome XII.</title>
        <authorList>
            <person name="Johnston M."/>
            <person name="Hillier L.W."/>
            <person name="Riles L."/>
            <person name="Albermann K."/>
            <person name="Andre B."/>
            <person name="Ansorge W."/>
            <person name="Benes V."/>
            <person name="Brueckner M."/>
            <person name="Delius H."/>
            <person name="Dubois E."/>
            <person name="Duesterhoeft A."/>
            <person name="Entian K.-D."/>
            <person name="Floeth M."/>
            <person name="Goffeau A."/>
            <person name="Hebling U."/>
            <person name="Heumann K."/>
            <person name="Heuss-Neitzel D."/>
            <person name="Hilbert H."/>
            <person name="Hilger F."/>
            <person name="Kleine K."/>
            <person name="Koetter P."/>
            <person name="Louis E.J."/>
            <person name="Messenguy F."/>
            <person name="Mewes H.-W."/>
            <person name="Miosga T."/>
            <person name="Moestl D."/>
            <person name="Mueller-Auer S."/>
            <person name="Nentwich U."/>
            <person name="Obermaier B."/>
            <person name="Piravandi E."/>
            <person name="Pohl T.M."/>
            <person name="Portetelle D."/>
            <person name="Purnelle B."/>
            <person name="Rechmann S."/>
            <person name="Rieger M."/>
            <person name="Rinke M."/>
            <person name="Rose M."/>
            <person name="Scharfe M."/>
            <person name="Scherens B."/>
            <person name="Scholler P."/>
            <person name="Schwager C."/>
            <person name="Schwarz S."/>
            <person name="Underwood A.P."/>
            <person name="Urrestarazu L.A."/>
            <person name="Vandenbol M."/>
            <person name="Verhasselt P."/>
            <person name="Vierendeels F."/>
            <person name="Voet M."/>
            <person name="Volckaert G."/>
            <person name="Voss H."/>
            <person name="Wambutt R."/>
            <person name="Wedler E."/>
            <person name="Wedler H."/>
            <person name="Zimmermann F.K."/>
            <person name="Zollner A."/>
            <person name="Hani J."/>
            <person name="Hoheisel J.D."/>
        </authorList>
    </citation>
    <scope>NUCLEOTIDE SEQUENCE [LARGE SCALE GENOMIC DNA]</scope>
    <source>
        <strain>ATCC 204508 / S288c</strain>
    </source>
</reference>
<reference key="2">
    <citation type="journal article" date="2014" name="G3 (Bethesda)">
        <title>The reference genome sequence of Saccharomyces cerevisiae: Then and now.</title>
        <authorList>
            <person name="Engel S.R."/>
            <person name="Dietrich F.S."/>
            <person name="Fisk D.G."/>
            <person name="Binkley G."/>
            <person name="Balakrishnan R."/>
            <person name="Costanzo M.C."/>
            <person name="Dwight S.S."/>
            <person name="Hitz B.C."/>
            <person name="Karra K."/>
            <person name="Nash R.S."/>
            <person name="Weng S."/>
            <person name="Wong E.D."/>
            <person name="Lloyd P."/>
            <person name="Skrzypek M.S."/>
            <person name="Miyasato S.R."/>
            <person name="Simison M."/>
            <person name="Cherry J.M."/>
        </authorList>
    </citation>
    <scope>GENOME REANNOTATION</scope>
    <source>
        <strain>ATCC 204508 / S288c</strain>
    </source>
</reference>
<reference key="3">
    <citation type="journal article" date="2007" name="Genome Res.">
        <title>Approaching a complete repository of sequence-verified protein-encoding clones for Saccharomyces cerevisiae.</title>
        <authorList>
            <person name="Hu Y."/>
            <person name="Rolfs A."/>
            <person name="Bhullar B."/>
            <person name="Murthy T.V.S."/>
            <person name="Zhu C."/>
            <person name="Berger M.F."/>
            <person name="Camargo A.A."/>
            <person name="Kelley F."/>
            <person name="McCarron S."/>
            <person name="Jepson D."/>
            <person name="Richardson A."/>
            <person name="Raphael J."/>
            <person name="Moreira D."/>
            <person name="Taycher E."/>
            <person name="Zuo D."/>
            <person name="Mohr S."/>
            <person name="Kane M.F."/>
            <person name="Williamson J."/>
            <person name="Simpson A.J.G."/>
            <person name="Bulyk M.L."/>
            <person name="Harlow E."/>
            <person name="Marsischky G."/>
            <person name="Kolodner R.D."/>
            <person name="LaBaer J."/>
        </authorList>
    </citation>
    <scope>NUCLEOTIDE SEQUENCE [GENOMIC DNA]</scope>
    <source>
        <strain>ATCC 204508 / S288c</strain>
    </source>
</reference>
<reference key="4">
    <citation type="journal article" date="1996" name="J. Biol. Chem.">
        <title>The ZRT2 gene encodes the low affinity zinc transporter in Saccharomyces cerevisiae.</title>
        <authorList>
            <person name="Zhao H."/>
            <person name="Eide D."/>
        </authorList>
    </citation>
    <scope>FUNCTION</scope>
</reference>
<reference key="5">
    <citation type="journal article" date="2009" name="Science">
        <title>Global analysis of Cdk1 substrate phosphorylation sites provides insights into evolution.</title>
        <authorList>
            <person name="Holt L.J."/>
            <person name="Tuch B.B."/>
            <person name="Villen J."/>
            <person name="Johnson A.D."/>
            <person name="Gygi S.P."/>
            <person name="Morgan D.O."/>
        </authorList>
    </citation>
    <scope>PHOSPHORYLATION [LARGE SCALE ANALYSIS] AT SER-148; SER-149; SER-162; SER-170 AND THR-188</scope>
    <scope>IDENTIFICATION BY MASS SPECTROMETRY [LARGE SCALE ANALYSIS]</scope>
</reference>
<evidence type="ECO:0000255" key="1"/>
<evidence type="ECO:0000269" key="2">
    <source>
    </source>
</evidence>
<evidence type="ECO:0000305" key="3"/>
<evidence type="ECO:0007744" key="4">
    <source>
    </source>
</evidence>
<sequence>MVDLIARDDSVDTCQASNGYNGHAGLRILAVFIILISSGLGVYFPILSSRYSFIRLPNWCFFIAKFFGSGVIVATAFVHLLQPAAEALGDECLGGTFAEYPWAFGICLMSLFLLFFTEIITHYFVAKTLGHDHGDHGEVTSIDVDAPSSGFVIRNMDSDPVSFNNEAAYSIHNDKTPYTTRNEEIVATPIKEKEPGSNVTNYDLEPGKTESLANELVPTSSHATNLASVPGKDHYSHENDHQDVSQLATRIEEEDKEQYLNQILAVFILEFGIIFHSVFVGLSLSVAGEEFETLFIVLTFHQMFEGLGLGTRVAETNWPESKKYMPWLMGLAFTLTSPIAVAVGIGVRHSWIPGSRRALIANGVFDSISSGILIYTGLVELMAHEFLYSNQFKGPDGLKKMLSAYLIMCCGAALMALLGKWA</sequence>
<gene>
    <name type="primary">ZRT2</name>
    <name type="ordered locus">YLR130C</name>
    <name type="ORF">L3120</name>
    <name type="ORF">L9606.9</name>
</gene>
<protein>
    <recommendedName>
        <fullName>Zinc-regulated transporter 2</fullName>
    </recommendedName>
    <alternativeName>
        <fullName>Low-affinity zinc transport protein ZRT2</fullName>
    </alternativeName>
</protein>
<dbReference type="EMBL" id="Z73302">
    <property type="protein sequence ID" value="CAA97701.1"/>
    <property type="molecule type" value="Genomic_DNA"/>
</dbReference>
<dbReference type="EMBL" id="U53881">
    <property type="protein sequence ID" value="AAB82397.1"/>
    <property type="molecule type" value="Genomic_DNA"/>
</dbReference>
<dbReference type="EMBL" id="X91258">
    <property type="protein sequence ID" value="CAA62642.1"/>
    <property type="molecule type" value="Genomic_DNA"/>
</dbReference>
<dbReference type="EMBL" id="AY693187">
    <property type="protein sequence ID" value="AAT93206.1"/>
    <property type="molecule type" value="Genomic_DNA"/>
</dbReference>
<dbReference type="EMBL" id="BK006945">
    <property type="protein sequence ID" value="DAA09441.1"/>
    <property type="molecule type" value="Genomic_DNA"/>
</dbReference>
<dbReference type="PIR" id="S59319">
    <property type="entry name" value="S59319"/>
</dbReference>
<dbReference type="RefSeq" id="NP_013231.1">
    <property type="nucleotide sequence ID" value="NM_001182017.1"/>
</dbReference>
<dbReference type="BioGRID" id="31399">
    <property type="interactions" value="30"/>
</dbReference>
<dbReference type="DIP" id="DIP-2924N"/>
<dbReference type="FunCoup" id="Q12436">
    <property type="interactions" value="682"/>
</dbReference>
<dbReference type="IntAct" id="Q12436">
    <property type="interactions" value="3"/>
</dbReference>
<dbReference type="MINT" id="Q12436"/>
<dbReference type="STRING" id="4932.YLR130C"/>
<dbReference type="TCDB" id="2.A.5.1.14">
    <property type="family name" value="the zinc (zn(2+))-iron (fe(2+)) permease (zip) family"/>
</dbReference>
<dbReference type="iPTMnet" id="Q12436"/>
<dbReference type="PaxDb" id="4932-YLR130C"/>
<dbReference type="PeptideAtlas" id="Q12436"/>
<dbReference type="EnsemblFungi" id="YLR130C_mRNA">
    <property type="protein sequence ID" value="YLR130C"/>
    <property type="gene ID" value="YLR130C"/>
</dbReference>
<dbReference type="GeneID" id="850821"/>
<dbReference type="KEGG" id="sce:YLR130C"/>
<dbReference type="AGR" id="SGD:S000004120"/>
<dbReference type="SGD" id="S000004120">
    <property type="gene designation" value="ZRT2"/>
</dbReference>
<dbReference type="VEuPathDB" id="FungiDB:YLR130C"/>
<dbReference type="eggNOG" id="KOG1558">
    <property type="taxonomic scope" value="Eukaryota"/>
</dbReference>
<dbReference type="HOGENOM" id="CLU_027089_0_2_1"/>
<dbReference type="InParanoid" id="Q12436"/>
<dbReference type="OMA" id="HHHGHFN"/>
<dbReference type="OrthoDB" id="448280at2759"/>
<dbReference type="BioCyc" id="YEAST:G3O-32272-MONOMER"/>
<dbReference type="BioGRID-ORCS" id="850821">
    <property type="hits" value="1 hit in 10 CRISPR screens"/>
</dbReference>
<dbReference type="PRO" id="PR:Q12436"/>
<dbReference type="Proteomes" id="UP000002311">
    <property type="component" value="Chromosome XII"/>
</dbReference>
<dbReference type="RNAct" id="Q12436">
    <property type="molecule type" value="protein"/>
</dbReference>
<dbReference type="GO" id="GO:0005783">
    <property type="term" value="C:endoplasmic reticulum"/>
    <property type="evidence" value="ECO:0007005"/>
    <property type="project" value="SGD"/>
</dbReference>
<dbReference type="GO" id="GO:0005886">
    <property type="term" value="C:plasma membrane"/>
    <property type="evidence" value="ECO:0000315"/>
    <property type="project" value="SGD"/>
</dbReference>
<dbReference type="GO" id="GO:0000007">
    <property type="term" value="F:low-affinity zinc ion transmembrane transporter activity"/>
    <property type="evidence" value="ECO:0000315"/>
    <property type="project" value="SGD"/>
</dbReference>
<dbReference type="GO" id="GO:0071578">
    <property type="term" value="P:zinc ion import across plasma membrane"/>
    <property type="evidence" value="ECO:0000315"/>
    <property type="project" value="SGD"/>
</dbReference>
<dbReference type="InterPro" id="IPR003689">
    <property type="entry name" value="ZIP"/>
</dbReference>
<dbReference type="InterPro" id="IPR004698">
    <property type="entry name" value="Zn/Fe_permease_fun/pln"/>
</dbReference>
<dbReference type="NCBIfam" id="TIGR00820">
    <property type="entry name" value="zip"/>
    <property type="match status" value="1"/>
</dbReference>
<dbReference type="PANTHER" id="PTHR11040:SF69">
    <property type="entry name" value="ZINC-REGULATED TRANSPORTER 2"/>
    <property type="match status" value="1"/>
</dbReference>
<dbReference type="PANTHER" id="PTHR11040">
    <property type="entry name" value="ZINC/IRON TRANSPORTER"/>
    <property type="match status" value="1"/>
</dbReference>
<dbReference type="Pfam" id="PF02535">
    <property type="entry name" value="Zip"/>
    <property type="match status" value="1"/>
</dbReference>
<comment type="function">
    <text evidence="2">Low-affinity zinc transport protein. Active in zinc-replete cells and is time-, temperature- and concentration-dependent and prefers zinc over other metals as its substrate.</text>
</comment>
<comment type="subcellular location">
    <subcellularLocation>
        <location evidence="3">Membrane</location>
        <topology evidence="3">Multi-pass membrane protein</topology>
    </subcellularLocation>
</comment>
<comment type="miscellaneous">
    <text>Inhibited by Cu(2+) and Fe(3+) ions.</text>
</comment>
<comment type="similarity">
    <text evidence="3">Belongs to the ZIP transporter (TC 2.A.5) family.</text>
</comment>
<name>ZRT2_YEAST</name>
<feature type="chain" id="PRO_0000068769" description="Zinc-regulated transporter 2">
    <location>
        <begin position="1"/>
        <end position="422"/>
    </location>
</feature>
<feature type="topological domain" description="Extracellular" evidence="1">
    <location>
        <begin position="1"/>
        <end position="27"/>
    </location>
</feature>
<feature type="transmembrane region" description="Helical" evidence="1">
    <location>
        <begin position="28"/>
        <end position="48"/>
    </location>
</feature>
<feature type="topological domain" description="Cytoplasmic" evidence="1">
    <location>
        <begin position="49"/>
        <end position="60"/>
    </location>
</feature>
<feature type="transmembrane region" description="Helical" evidence="1">
    <location>
        <begin position="61"/>
        <end position="81"/>
    </location>
</feature>
<feature type="topological domain" description="Extracellular" evidence="1">
    <location>
        <begin position="82"/>
        <end position="99"/>
    </location>
</feature>
<feature type="transmembrane region" description="Helical" evidence="1">
    <location>
        <begin position="100"/>
        <end position="120"/>
    </location>
</feature>
<feature type="topological domain" description="Cytoplasmic" evidence="1">
    <location>
        <begin position="121"/>
        <end position="262"/>
    </location>
</feature>
<feature type="transmembrane region" description="Helical" evidence="1">
    <location>
        <begin position="263"/>
        <end position="283"/>
    </location>
</feature>
<feature type="topological domain" description="Extracellular" evidence="1">
    <location>
        <begin position="284"/>
        <end position="290"/>
    </location>
</feature>
<feature type="transmembrane region" description="Helical" evidence="1">
    <location>
        <begin position="291"/>
        <end position="311"/>
    </location>
</feature>
<feature type="topological domain" description="Cytoplasmic" evidence="1">
    <location>
        <begin position="312"/>
        <end position="326"/>
    </location>
</feature>
<feature type="transmembrane region" description="Helical" evidence="1">
    <location>
        <begin position="327"/>
        <end position="347"/>
    </location>
</feature>
<feature type="topological domain" description="Extracellular" evidence="1">
    <location>
        <begin position="348"/>
        <end position="358"/>
    </location>
</feature>
<feature type="transmembrane region" description="Helical" evidence="1">
    <location>
        <begin position="359"/>
        <end position="379"/>
    </location>
</feature>
<feature type="topological domain" description="Cytoplasmic" evidence="1">
    <location>
        <begin position="380"/>
        <end position="400"/>
    </location>
</feature>
<feature type="transmembrane region" description="Helical" evidence="1">
    <location>
        <begin position="401"/>
        <end position="421"/>
    </location>
</feature>
<feature type="topological domain" description="Extracellular" evidence="1">
    <location>
        <position position="422"/>
    </location>
</feature>
<feature type="modified residue" description="Phosphoserine" evidence="4">
    <location>
        <position position="148"/>
    </location>
</feature>
<feature type="modified residue" description="Phosphoserine" evidence="4">
    <location>
        <position position="149"/>
    </location>
</feature>
<feature type="modified residue" description="Phosphoserine" evidence="4">
    <location>
        <position position="162"/>
    </location>
</feature>
<feature type="modified residue" description="Phosphoserine" evidence="4">
    <location>
        <position position="170"/>
    </location>
</feature>
<feature type="modified residue" description="Phosphothreonine" evidence="4">
    <location>
        <position position="188"/>
    </location>
</feature>
<accession>Q12436</accession>
<accession>D6VYC5</accession>